<sequence>MVDKSQETTHFGFQTVAKEQKADMVAHVFHSVASKYDVMNDLMSFGIHRLWKRFTIDCSGVRRGQTVLDLAGGTGDLTAKFSRMVGETGKVVLADINESMLKMGREKLRNIGVIGNVEYVQANAEALPFPDNTFDCITISFGLRNVTEKEKALRSMYRVLKPGGRLLVLEFSKPIIEPLSKAYDAYSFHILPRIGSLVANDADSYRYLAESIRMHPDQDTLKAMMEDAGFESVDYYNLTAGVVALHRGYKF</sequence>
<name>UBIE_ESCF3</name>
<comment type="function">
    <text evidence="1">Methyltransferase required for the conversion of demethylmenaquinol (DMKH2) to menaquinol (MKH2) and the conversion of 2-polyprenyl-6-methoxy-1,4-benzoquinol (DDMQH2) to 2-polyprenyl-3-methyl-6-methoxy-1,4-benzoquinol (DMQH2).</text>
</comment>
<comment type="catalytic activity">
    <reaction evidence="1">
        <text>a 2-demethylmenaquinol + S-adenosyl-L-methionine = a menaquinol + S-adenosyl-L-homocysteine + H(+)</text>
        <dbReference type="Rhea" id="RHEA:42640"/>
        <dbReference type="Rhea" id="RHEA-COMP:9539"/>
        <dbReference type="Rhea" id="RHEA-COMP:9563"/>
        <dbReference type="ChEBI" id="CHEBI:15378"/>
        <dbReference type="ChEBI" id="CHEBI:18151"/>
        <dbReference type="ChEBI" id="CHEBI:55437"/>
        <dbReference type="ChEBI" id="CHEBI:57856"/>
        <dbReference type="ChEBI" id="CHEBI:59789"/>
        <dbReference type="EC" id="2.1.1.163"/>
    </reaction>
</comment>
<comment type="catalytic activity">
    <reaction evidence="1">
        <text>a 2-methoxy-6-(all-trans-polyprenyl)benzene-1,4-diol + S-adenosyl-L-methionine = a 5-methoxy-2-methyl-3-(all-trans-polyprenyl)benzene-1,4-diol + S-adenosyl-L-homocysteine + H(+)</text>
        <dbReference type="Rhea" id="RHEA:28286"/>
        <dbReference type="Rhea" id="RHEA-COMP:10858"/>
        <dbReference type="Rhea" id="RHEA-COMP:10859"/>
        <dbReference type="ChEBI" id="CHEBI:15378"/>
        <dbReference type="ChEBI" id="CHEBI:57856"/>
        <dbReference type="ChEBI" id="CHEBI:59789"/>
        <dbReference type="ChEBI" id="CHEBI:84166"/>
        <dbReference type="ChEBI" id="CHEBI:84167"/>
        <dbReference type="EC" id="2.1.1.201"/>
    </reaction>
</comment>
<comment type="pathway">
    <text evidence="1">Quinol/quinone metabolism; menaquinone biosynthesis; menaquinol from 1,4-dihydroxy-2-naphthoate: step 2/2.</text>
</comment>
<comment type="pathway">
    <text evidence="1">Cofactor biosynthesis; ubiquinone biosynthesis.</text>
</comment>
<comment type="similarity">
    <text evidence="1">Belongs to the class I-like SAM-binding methyltransferase superfamily. MenG/UbiE family.</text>
</comment>
<gene>
    <name evidence="1" type="primary">ubiE</name>
    <name type="ordered locus">EFER_3647</name>
</gene>
<evidence type="ECO:0000255" key="1">
    <source>
        <dbReference type="HAMAP-Rule" id="MF_01813"/>
    </source>
</evidence>
<reference key="1">
    <citation type="journal article" date="2009" name="PLoS Genet.">
        <title>Organised genome dynamics in the Escherichia coli species results in highly diverse adaptive paths.</title>
        <authorList>
            <person name="Touchon M."/>
            <person name="Hoede C."/>
            <person name="Tenaillon O."/>
            <person name="Barbe V."/>
            <person name="Baeriswyl S."/>
            <person name="Bidet P."/>
            <person name="Bingen E."/>
            <person name="Bonacorsi S."/>
            <person name="Bouchier C."/>
            <person name="Bouvet O."/>
            <person name="Calteau A."/>
            <person name="Chiapello H."/>
            <person name="Clermont O."/>
            <person name="Cruveiller S."/>
            <person name="Danchin A."/>
            <person name="Diard M."/>
            <person name="Dossat C."/>
            <person name="Karoui M.E."/>
            <person name="Frapy E."/>
            <person name="Garry L."/>
            <person name="Ghigo J.M."/>
            <person name="Gilles A.M."/>
            <person name="Johnson J."/>
            <person name="Le Bouguenec C."/>
            <person name="Lescat M."/>
            <person name="Mangenot S."/>
            <person name="Martinez-Jehanne V."/>
            <person name="Matic I."/>
            <person name="Nassif X."/>
            <person name="Oztas S."/>
            <person name="Petit M.A."/>
            <person name="Pichon C."/>
            <person name="Rouy Z."/>
            <person name="Ruf C.S."/>
            <person name="Schneider D."/>
            <person name="Tourret J."/>
            <person name="Vacherie B."/>
            <person name="Vallenet D."/>
            <person name="Medigue C."/>
            <person name="Rocha E.P.C."/>
            <person name="Denamur E."/>
        </authorList>
    </citation>
    <scope>NUCLEOTIDE SEQUENCE [LARGE SCALE GENOMIC DNA]</scope>
    <source>
        <strain>ATCC 35469 / DSM 13698 / BCRC 15582 / CCUG 18766 / IAM 14443 / JCM 21226 / LMG 7866 / NBRC 102419 / NCTC 12128 / CDC 0568-73</strain>
    </source>
</reference>
<feature type="chain" id="PRO_1000187766" description="Ubiquinone/menaquinone biosynthesis C-methyltransferase UbiE">
    <location>
        <begin position="1"/>
        <end position="251"/>
    </location>
</feature>
<feature type="binding site" evidence="1">
    <location>
        <position position="74"/>
    </location>
    <ligand>
        <name>S-adenosyl-L-methionine</name>
        <dbReference type="ChEBI" id="CHEBI:59789"/>
    </ligand>
</feature>
<feature type="binding site" evidence="1">
    <location>
        <position position="95"/>
    </location>
    <ligand>
        <name>S-adenosyl-L-methionine</name>
        <dbReference type="ChEBI" id="CHEBI:59789"/>
    </ligand>
</feature>
<feature type="binding site" evidence="1">
    <location>
        <begin position="123"/>
        <end position="124"/>
    </location>
    <ligand>
        <name>S-adenosyl-L-methionine</name>
        <dbReference type="ChEBI" id="CHEBI:59789"/>
    </ligand>
</feature>
<feature type="binding site" evidence="1">
    <location>
        <position position="140"/>
    </location>
    <ligand>
        <name>S-adenosyl-L-methionine</name>
        <dbReference type="ChEBI" id="CHEBI:59789"/>
    </ligand>
</feature>
<organism>
    <name type="scientific">Escherichia fergusonii (strain ATCC 35469 / DSM 13698 / CCUG 18766 / IAM 14443 / JCM 21226 / LMG 7866 / NBRC 102419 / NCTC 12128 / CDC 0568-73)</name>
    <dbReference type="NCBI Taxonomy" id="585054"/>
    <lineage>
        <taxon>Bacteria</taxon>
        <taxon>Pseudomonadati</taxon>
        <taxon>Pseudomonadota</taxon>
        <taxon>Gammaproteobacteria</taxon>
        <taxon>Enterobacterales</taxon>
        <taxon>Enterobacteriaceae</taxon>
        <taxon>Escherichia</taxon>
    </lineage>
</organism>
<keyword id="KW-0474">Menaquinone biosynthesis</keyword>
<keyword id="KW-0489">Methyltransferase</keyword>
<keyword id="KW-0949">S-adenosyl-L-methionine</keyword>
<keyword id="KW-0808">Transferase</keyword>
<keyword id="KW-0831">Ubiquinone biosynthesis</keyword>
<proteinExistence type="inferred from homology"/>
<protein>
    <recommendedName>
        <fullName evidence="1">Ubiquinone/menaquinone biosynthesis C-methyltransferase UbiE</fullName>
        <ecNumber evidence="1">2.1.1.163</ecNumber>
        <ecNumber evidence="1">2.1.1.201</ecNumber>
    </recommendedName>
    <alternativeName>
        <fullName evidence="1">2-methoxy-6-polyprenyl-1,4-benzoquinol methylase</fullName>
    </alternativeName>
    <alternativeName>
        <fullName evidence="1">Demethylmenaquinone methyltransferase</fullName>
    </alternativeName>
</protein>
<dbReference type="EC" id="2.1.1.163" evidence="1"/>
<dbReference type="EC" id="2.1.1.201" evidence="1"/>
<dbReference type="EMBL" id="CU928158">
    <property type="protein sequence ID" value="CAQ91109.1"/>
    <property type="molecule type" value="Genomic_DNA"/>
</dbReference>
<dbReference type="RefSeq" id="WP_000227963.1">
    <property type="nucleotide sequence ID" value="NC_011740.1"/>
</dbReference>
<dbReference type="SMR" id="B7LU01"/>
<dbReference type="GeneID" id="75059752"/>
<dbReference type="KEGG" id="efe:EFER_3647"/>
<dbReference type="HOGENOM" id="CLU_037990_0_0_6"/>
<dbReference type="OrthoDB" id="9808140at2"/>
<dbReference type="UniPathway" id="UPA00079">
    <property type="reaction ID" value="UER00169"/>
</dbReference>
<dbReference type="UniPathway" id="UPA00232"/>
<dbReference type="Proteomes" id="UP000000745">
    <property type="component" value="Chromosome"/>
</dbReference>
<dbReference type="GO" id="GO:0008425">
    <property type="term" value="F:2-methoxy-6-polyprenyl-1,4-benzoquinol methyltransferase activity"/>
    <property type="evidence" value="ECO:0007669"/>
    <property type="project" value="UniProtKB-UniRule"/>
</dbReference>
<dbReference type="GO" id="GO:0043770">
    <property type="term" value="F:demethylmenaquinone methyltransferase activity"/>
    <property type="evidence" value="ECO:0007669"/>
    <property type="project" value="UniProtKB-UniRule"/>
</dbReference>
<dbReference type="GO" id="GO:0009060">
    <property type="term" value="P:aerobic respiration"/>
    <property type="evidence" value="ECO:0007669"/>
    <property type="project" value="UniProtKB-UniRule"/>
</dbReference>
<dbReference type="GO" id="GO:0009234">
    <property type="term" value="P:menaquinone biosynthetic process"/>
    <property type="evidence" value="ECO:0007669"/>
    <property type="project" value="UniProtKB-UniRule"/>
</dbReference>
<dbReference type="GO" id="GO:0032259">
    <property type="term" value="P:methylation"/>
    <property type="evidence" value="ECO:0007669"/>
    <property type="project" value="UniProtKB-KW"/>
</dbReference>
<dbReference type="CDD" id="cd02440">
    <property type="entry name" value="AdoMet_MTases"/>
    <property type="match status" value="1"/>
</dbReference>
<dbReference type="FunFam" id="3.40.50.150:FF:000014">
    <property type="entry name" value="Ubiquinone/menaquinone biosynthesis C-methyltransferase UbiE"/>
    <property type="match status" value="1"/>
</dbReference>
<dbReference type="Gene3D" id="3.40.50.150">
    <property type="entry name" value="Vaccinia Virus protein VP39"/>
    <property type="match status" value="1"/>
</dbReference>
<dbReference type="HAMAP" id="MF_01813">
    <property type="entry name" value="MenG_UbiE_methyltr"/>
    <property type="match status" value="1"/>
</dbReference>
<dbReference type="InterPro" id="IPR029063">
    <property type="entry name" value="SAM-dependent_MTases_sf"/>
</dbReference>
<dbReference type="InterPro" id="IPR004033">
    <property type="entry name" value="UbiE/COQ5_MeTrFase"/>
</dbReference>
<dbReference type="InterPro" id="IPR023576">
    <property type="entry name" value="UbiE/COQ5_MeTrFase_CS"/>
</dbReference>
<dbReference type="NCBIfam" id="TIGR01934">
    <property type="entry name" value="MenG_MenH_UbiE"/>
    <property type="match status" value="1"/>
</dbReference>
<dbReference type="NCBIfam" id="NF001240">
    <property type="entry name" value="PRK00216.1-1"/>
    <property type="match status" value="1"/>
</dbReference>
<dbReference type="NCBIfam" id="NF001242">
    <property type="entry name" value="PRK00216.1-3"/>
    <property type="match status" value="1"/>
</dbReference>
<dbReference type="NCBIfam" id="NF001244">
    <property type="entry name" value="PRK00216.1-5"/>
    <property type="match status" value="1"/>
</dbReference>
<dbReference type="PANTHER" id="PTHR43591:SF24">
    <property type="entry name" value="2-METHOXY-6-POLYPRENYL-1,4-BENZOQUINOL METHYLASE, MITOCHONDRIAL"/>
    <property type="match status" value="1"/>
</dbReference>
<dbReference type="PANTHER" id="PTHR43591">
    <property type="entry name" value="METHYLTRANSFERASE"/>
    <property type="match status" value="1"/>
</dbReference>
<dbReference type="Pfam" id="PF01209">
    <property type="entry name" value="Ubie_methyltran"/>
    <property type="match status" value="1"/>
</dbReference>
<dbReference type="SUPFAM" id="SSF53335">
    <property type="entry name" value="S-adenosyl-L-methionine-dependent methyltransferases"/>
    <property type="match status" value="1"/>
</dbReference>
<dbReference type="PROSITE" id="PS51608">
    <property type="entry name" value="SAM_MT_UBIE"/>
    <property type="match status" value="1"/>
</dbReference>
<dbReference type="PROSITE" id="PS01183">
    <property type="entry name" value="UBIE_1"/>
    <property type="match status" value="1"/>
</dbReference>
<dbReference type="PROSITE" id="PS01184">
    <property type="entry name" value="UBIE_2"/>
    <property type="match status" value="1"/>
</dbReference>
<accession>B7LU01</accession>